<organism>
    <name type="scientific">Staphylococcus epidermidis (strain ATCC 35984 / DSM 28319 / BCRC 17069 / CCUG 31568 / BM 3577 / RP62A)</name>
    <dbReference type="NCBI Taxonomy" id="176279"/>
    <lineage>
        <taxon>Bacteria</taxon>
        <taxon>Bacillati</taxon>
        <taxon>Bacillota</taxon>
        <taxon>Bacilli</taxon>
        <taxon>Bacillales</taxon>
        <taxon>Staphylococcaceae</taxon>
        <taxon>Staphylococcus</taxon>
    </lineage>
</organism>
<feature type="chain" id="PRO_0000113862" description="Protein GrpE">
    <location>
        <begin position="1"/>
        <end position="210"/>
    </location>
</feature>
<feature type="region of interest" description="Disordered" evidence="2">
    <location>
        <begin position="1"/>
        <end position="71"/>
    </location>
</feature>
<feature type="compositionally biased region" description="Acidic residues" evidence="2">
    <location>
        <begin position="11"/>
        <end position="23"/>
    </location>
</feature>
<feature type="compositionally biased region" description="Polar residues" evidence="2">
    <location>
        <begin position="24"/>
        <end position="35"/>
    </location>
</feature>
<feature type="compositionally biased region" description="Low complexity" evidence="2">
    <location>
        <begin position="36"/>
        <end position="46"/>
    </location>
</feature>
<feature type="compositionally biased region" description="Acidic residues" evidence="2">
    <location>
        <begin position="47"/>
        <end position="60"/>
    </location>
</feature>
<feature type="compositionally biased region" description="Basic and acidic residues" evidence="2">
    <location>
        <begin position="61"/>
        <end position="71"/>
    </location>
</feature>
<accession>Q5HNW5</accession>
<evidence type="ECO:0000255" key="1">
    <source>
        <dbReference type="HAMAP-Rule" id="MF_01151"/>
    </source>
</evidence>
<evidence type="ECO:0000256" key="2">
    <source>
        <dbReference type="SAM" id="MobiDB-lite"/>
    </source>
</evidence>
<protein>
    <recommendedName>
        <fullName evidence="1">Protein GrpE</fullName>
    </recommendedName>
    <alternativeName>
        <fullName evidence="1">HSP-70 cofactor</fullName>
    </alternativeName>
</protein>
<gene>
    <name evidence="1" type="primary">grpE</name>
    <name type="ordered locus">SERP1149</name>
</gene>
<reference key="1">
    <citation type="journal article" date="2005" name="J. Bacteriol.">
        <title>Insights on evolution of virulence and resistance from the complete genome analysis of an early methicillin-resistant Staphylococcus aureus strain and a biofilm-producing methicillin-resistant Staphylococcus epidermidis strain.</title>
        <authorList>
            <person name="Gill S.R."/>
            <person name="Fouts D.E."/>
            <person name="Archer G.L."/>
            <person name="Mongodin E.F."/>
            <person name="DeBoy R.T."/>
            <person name="Ravel J."/>
            <person name="Paulsen I.T."/>
            <person name="Kolonay J.F."/>
            <person name="Brinkac L.M."/>
            <person name="Beanan M.J."/>
            <person name="Dodson R.J."/>
            <person name="Daugherty S.C."/>
            <person name="Madupu R."/>
            <person name="Angiuoli S.V."/>
            <person name="Durkin A.S."/>
            <person name="Haft D.H."/>
            <person name="Vamathevan J.J."/>
            <person name="Khouri H."/>
            <person name="Utterback T.R."/>
            <person name="Lee C."/>
            <person name="Dimitrov G."/>
            <person name="Jiang L."/>
            <person name="Qin H."/>
            <person name="Weidman J."/>
            <person name="Tran K."/>
            <person name="Kang K.H."/>
            <person name="Hance I.R."/>
            <person name="Nelson K.E."/>
            <person name="Fraser C.M."/>
        </authorList>
    </citation>
    <scope>NUCLEOTIDE SEQUENCE [LARGE SCALE GENOMIC DNA]</scope>
    <source>
        <strain>ATCC 35984 / DSM 28319 / BCRC 17069 / CCUG 31568 / BM 3577 / RP62A</strain>
    </source>
</reference>
<keyword id="KW-0143">Chaperone</keyword>
<keyword id="KW-0963">Cytoplasm</keyword>
<keyword id="KW-1185">Reference proteome</keyword>
<keyword id="KW-0346">Stress response</keyword>
<proteinExistence type="inferred from homology"/>
<name>GRPE_STAEQ</name>
<sequence length="210" mass="24035">MSEKDQSVNNTEEDFNVETEDNQNDTNIENSVSNTDNSEANASDSENNSEESIKDEESESQDTKIKELEKLANDNEEKYLRLYAEFENYKRRIQKENQINATYKAQGVLTDILPSIDNIERALQIEGDDESFKSLQKGVQMVHESLLRALKDNGLEEILAEGKEFDPNLHQAVVQDDNPDFKSGEVTQELQKGYKLKDRVLRPSMVKVNQ</sequence>
<comment type="function">
    <text evidence="1">Participates actively in the response to hyperosmotic and heat shock by preventing the aggregation of stress-denatured proteins, in association with DnaK and GrpE. It is the nucleotide exchange factor for DnaK and may function as a thermosensor. Unfolded proteins bind initially to DnaJ; upon interaction with the DnaJ-bound protein, DnaK hydrolyzes its bound ATP, resulting in the formation of a stable complex. GrpE releases ADP from DnaK; ATP binding to DnaK triggers the release of the substrate protein, thus completing the reaction cycle. Several rounds of ATP-dependent interactions between DnaJ, DnaK and GrpE are required for fully efficient folding.</text>
</comment>
<comment type="subunit">
    <text evidence="1">Homodimer.</text>
</comment>
<comment type="subcellular location">
    <subcellularLocation>
        <location evidence="1">Cytoplasm</location>
    </subcellularLocation>
</comment>
<comment type="similarity">
    <text evidence="1">Belongs to the GrpE family.</text>
</comment>
<dbReference type="EMBL" id="CP000029">
    <property type="protein sequence ID" value="AAW54484.1"/>
    <property type="molecule type" value="Genomic_DNA"/>
</dbReference>
<dbReference type="RefSeq" id="WP_001831117.1">
    <property type="nucleotide sequence ID" value="NC_002976.3"/>
</dbReference>
<dbReference type="SMR" id="Q5HNW5"/>
<dbReference type="STRING" id="176279.SERP1149"/>
<dbReference type="GeneID" id="50018616"/>
<dbReference type="KEGG" id="ser:SERP1149"/>
<dbReference type="eggNOG" id="COG0576">
    <property type="taxonomic scope" value="Bacteria"/>
</dbReference>
<dbReference type="HOGENOM" id="CLU_057217_5_1_9"/>
<dbReference type="Proteomes" id="UP000000531">
    <property type="component" value="Chromosome"/>
</dbReference>
<dbReference type="GO" id="GO:0005737">
    <property type="term" value="C:cytoplasm"/>
    <property type="evidence" value="ECO:0007669"/>
    <property type="project" value="UniProtKB-SubCell"/>
</dbReference>
<dbReference type="GO" id="GO:0000774">
    <property type="term" value="F:adenyl-nucleotide exchange factor activity"/>
    <property type="evidence" value="ECO:0007669"/>
    <property type="project" value="InterPro"/>
</dbReference>
<dbReference type="GO" id="GO:0042803">
    <property type="term" value="F:protein homodimerization activity"/>
    <property type="evidence" value="ECO:0007669"/>
    <property type="project" value="InterPro"/>
</dbReference>
<dbReference type="GO" id="GO:0051087">
    <property type="term" value="F:protein-folding chaperone binding"/>
    <property type="evidence" value="ECO:0007669"/>
    <property type="project" value="InterPro"/>
</dbReference>
<dbReference type="GO" id="GO:0051082">
    <property type="term" value="F:unfolded protein binding"/>
    <property type="evidence" value="ECO:0007669"/>
    <property type="project" value="TreeGrafter"/>
</dbReference>
<dbReference type="GO" id="GO:0006457">
    <property type="term" value="P:protein folding"/>
    <property type="evidence" value="ECO:0007669"/>
    <property type="project" value="InterPro"/>
</dbReference>
<dbReference type="CDD" id="cd00446">
    <property type="entry name" value="GrpE"/>
    <property type="match status" value="1"/>
</dbReference>
<dbReference type="FunFam" id="2.30.22.10:FF:000001">
    <property type="entry name" value="Protein GrpE"/>
    <property type="match status" value="1"/>
</dbReference>
<dbReference type="Gene3D" id="3.90.20.20">
    <property type="match status" value="1"/>
</dbReference>
<dbReference type="Gene3D" id="2.30.22.10">
    <property type="entry name" value="Head domain of nucleotide exchange factor GrpE"/>
    <property type="match status" value="1"/>
</dbReference>
<dbReference type="HAMAP" id="MF_01151">
    <property type="entry name" value="GrpE"/>
    <property type="match status" value="1"/>
</dbReference>
<dbReference type="InterPro" id="IPR000740">
    <property type="entry name" value="GrpE"/>
</dbReference>
<dbReference type="InterPro" id="IPR013805">
    <property type="entry name" value="GrpE_coiled_coil"/>
</dbReference>
<dbReference type="InterPro" id="IPR009012">
    <property type="entry name" value="GrpE_head"/>
</dbReference>
<dbReference type="NCBIfam" id="NF010738">
    <property type="entry name" value="PRK14140.1"/>
    <property type="match status" value="1"/>
</dbReference>
<dbReference type="PANTHER" id="PTHR21237">
    <property type="entry name" value="GRPE PROTEIN"/>
    <property type="match status" value="1"/>
</dbReference>
<dbReference type="PANTHER" id="PTHR21237:SF23">
    <property type="entry name" value="GRPE PROTEIN HOMOLOG, MITOCHONDRIAL"/>
    <property type="match status" value="1"/>
</dbReference>
<dbReference type="Pfam" id="PF01025">
    <property type="entry name" value="GrpE"/>
    <property type="match status" value="1"/>
</dbReference>
<dbReference type="PRINTS" id="PR00773">
    <property type="entry name" value="GRPEPROTEIN"/>
</dbReference>
<dbReference type="SUPFAM" id="SSF58014">
    <property type="entry name" value="Coiled-coil domain of nucleotide exchange factor GrpE"/>
    <property type="match status" value="1"/>
</dbReference>
<dbReference type="SUPFAM" id="SSF51064">
    <property type="entry name" value="Head domain of nucleotide exchange factor GrpE"/>
    <property type="match status" value="1"/>
</dbReference>
<dbReference type="PROSITE" id="PS01071">
    <property type="entry name" value="GRPE"/>
    <property type="match status" value="1"/>
</dbReference>